<dbReference type="EMBL" id="DQ902575">
    <property type="protein sequence ID" value="ABK41955.1"/>
    <property type="molecule type" value="mRNA"/>
</dbReference>
<dbReference type="PDB" id="3HH7">
    <property type="method" value="X-ray"/>
    <property type="resolution" value="1.55 A"/>
    <property type="chains" value="A/B=22-86"/>
</dbReference>
<dbReference type="PDBsum" id="3HH7"/>
<dbReference type="SMR" id="A8N286"/>
<dbReference type="TopDownProteomics" id="A8N286"/>
<dbReference type="EvolutionaryTrace" id="A8N286"/>
<dbReference type="GO" id="GO:0005576">
    <property type="term" value="C:extracellular region"/>
    <property type="evidence" value="ECO:0007669"/>
    <property type="project" value="UniProtKB-SubCell"/>
</dbReference>
<dbReference type="GO" id="GO:0030550">
    <property type="term" value="F:acetylcholine receptor inhibitor activity"/>
    <property type="evidence" value="ECO:0007669"/>
    <property type="project" value="UniProtKB-KW"/>
</dbReference>
<dbReference type="GO" id="GO:0099106">
    <property type="term" value="F:ion channel regulator activity"/>
    <property type="evidence" value="ECO:0007669"/>
    <property type="project" value="UniProtKB-KW"/>
</dbReference>
<dbReference type="GO" id="GO:0090729">
    <property type="term" value="F:toxin activity"/>
    <property type="evidence" value="ECO:0007669"/>
    <property type="project" value="UniProtKB-KW"/>
</dbReference>
<dbReference type="CDD" id="cd00206">
    <property type="entry name" value="TFP_snake_toxin"/>
    <property type="match status" value="1"/>
</dbReference>
<dbReference type="FunFam" id="2.10.60.10:FF:000024">
    <property type="entry name" value="Cytotoxin 1"/>
    <property type="match status" value="1"/>
</dbReference>
<dbReference type="Gene3D" id="2.10.60.10">
    <property type="entry name" value="CD59"/>
    <property type="match status" value="1"/>
</dbReference>
<dbReference type="InterPro" id="IPR003571">
    <property type="entry name" value="Snake_3FTx"/>
</dbReference>
<dbReference type="InterPro" id="IPR045860">
    <property type="entry name" value="Snake_toxin-like_sf"/>
</dbReference>
<dbReference type="InterPro" id="IPR018354">
    <property type="entry name" value="Snake_toxin_con_site"/>
</dbReference>
<dbReference type="InterPro" id="IPR054131">
    <property type="entry name" value="Toxin_cobra-type"/>
</dbReference>
<dbReference type="Pfam" id="PF21947">
    <property type="entry name" value="Toxin_cobra-type"/>
    <property type="match status" value="1"/>
</dbReference>
<dbReference type="SUPFAM" id="SSF57302">
    <property type="entry name" value="Snake toxin-like"/>
    <property type="match status" value="1"/>
</dbReference>
<dbReference type="PROSITE" id="PS00272">
    <property type="entry name" value="SNAKE_TOXIN"/>
    <property type="match status" value="1"/>
</dbReference>
<comment type="function">
    <text evidence="2">Antagonist of muscle (alpha-1-beta-1-delta-epsilon/CHRNA1-CHRNB1-CHRND-CHRNE) and neuronal (alpha-7/CHRNA7, alpha-3-beta-2/CHRNA3-CHRNB2, alpha-4-beta-2/CHRNA4-CHRNB2) nicotinic acetylcholine receptors (nAChR) (PubMed:20071329). The highest affinity is for human alpha-7/CHRNA7 nAChRs (IC(50)=180 nM), compared to human alpha-1-beta-1-delta-epsilon/CHRNA1-CHRNB1-CHRND-CHRNE nAChR (IC(50)= 550 nM), alpha-3-beta-2/CHRNA3-CHRNB2 nAChR (IC(50)=500 nM), and alpha-4-beta-2/CHRNA4-CHRNB2 nAChR (IC(50)=2.6 uM).</text>
</comment>
<comment type="subunit">
    <text evidence="2">Homodimer; non-covalently linked.</text>
</comment>
<comment type="subcellular location">
    <subcellularLocation>
        <location evidence="2">Secreted</location>
    </subcellularLocation>
</comment>
<comment type="tissue specificity">
    <text evidence="4">Expressed by the venom gland.</text>
</comment>
<comment type="similarity">
    <text evidence="3">Belongs to the three-finger toxin family. Short-chain subfamily. Orphan group VIII (haditoxin) sub-subfamily.</text>
</comment>
<accession>A8N286</accession>
<evidence type="ECO:0000255" key="1"/>
<evidence type="ECO:0000269" key="2">
    <source>
    </source>
</evidence>
<evidence type="ECO:0000305" key="3"/>
<evidence type="ECO:0000305" key="4">
    <source>
    </source>
</evidence>
<evidence type="ECO:0000312" key="5">
    <source>
        <dbReference type="PDB" id="3HH7"/>
    </source>
</evidence>
<evidence type="ECO:0007829" key="6">
    <source>
        <dbReference type="PDB" id="3HH7"/>
    </source>
</evidence>
<feature type="signal peptide" evidence="1">
    <location>
        <begin position="1"/>
        <end position="21"/>
    </location>
</feature>
<feature type="chain" id="PRO_0000318907" description="Haditoxin" evidence="2">
    <location>
        <begin position="22"/>
        <end position="86"/>
    </location>
</feature>
<feature type="disulfide bond" evidence="2 5">
    <location>
        <begin position="24"/>
        <end position="45"/>
    </location>
</feature>
<feature type="disulfide bond" evidence="2 5">
    <location>
        <begin position="38"/>
        <end position="62"/>
    </location>
</feature>
<feature type="disulfide bond" evidence="2 5">
    <location>
        <begin position="66"/>
        <end position="78"/>
    </location>
</feature>
<feature type="disulfide bond" evidence="2 5">
    <location>
        <begin position="79"/>
        <end position="84"/>
    </location>
</feature>
<feature type="strand" evidence="6">
    <location>
        <begin position="23"/>
        <end position="25"/>
    </location>
</feature>
<feature type="strand" evidence="6">
    <location>
        <begin position="35"/>
        <end position="37"/>
    </location>
</feature>
<feature type="strand" evidence="6">
    <location>
        <begin position="44"/>
        <end position="52"/>
    </location>
</feature>
<feature type="strand" evidence="6">
    <location>
        <begin position="55"/>
        <end position="65"/>
    </location>
</feature>
<feature type="strand" evidence="6">
    <location>
        <begin position="73"/>
        <end position="79"/>
    </location>
</feature>
<feature type="turn" evidence="6">
    <location>
        <begin position="82"/>
        <end position="85"/>
    </location>
</feature>
<reference key="1">
    <citation type="journal article" date="2007" name="FASEB J.">
        <title>Beta-cardiotoxin: a new three-finger toxin from Ophiophagus hannah (king cobra) venom with beta-blocker activity.</title>
        <authorList>
            <person name="Rajagopalan N."/>
            <person name="Pung Y.F."/>
            <person name="Zhu Y.Z."/>
            <person name="Wong P.T.H."/>
            <person name="Kumar P.P."/>
            <person name="Kini R.M."/>
        </authorList>
    </citation>
    <scope>NUCLEOTIDE SEQUENCE [MRNA]</scope>
    <source>
        <tissue>Venom gland</tissue>
    </source>
</reference>
<reference key="2">
    <citation type="journal article" date="2013" name="Proc. Natl. Acad. Sci. U.S.A.">
        <title>The king cobra genome reveals dynamic gene evolution and adaptation in the snake venom system.</title>
        <authorList>
            <person name="Vonk F.J."/>
            <person name="Casewell N.R."/>
            <person name="Henkel C.V."/>
            <person name="Heimberg A.M."/>
            <person name="Jansen H.J."/>
            <person name="McCleary R.J."/>
            <person name="Kerkkamp H.M."/>
            <person name="Vos R.A."/>
            <person name="Guerreiro I."/>
            <person name="Calvete J.J."/>
            <person name="Wuster W."/>
            <person name="Woods A.E."/>
            <person name="Logan J.M."/>
            <person name="Harrison R.A."/>
            <person name="Castoe T.A."/>
            <person name="de Koning A.P."/>
            <person name="Pollock D.D."/>
            <person name="Yandell M."/>
            <person name="Calderon D."/>
            <person name="Renjifo C."/>
            <person name="Currier R.B."/>
            <person name="Salgado D."/>
            <person name="Pla D."/>
            <person name="Sanz L."/>
            <person name="Hyder A.S."/>
            <person name="Ribeiro J.M."/>
            <person name="Arntzen J.W."/>
            <person name="van den Thillart G.E."/>
            <person name="Boetzer M."/>
            <person name="Pirovano W."/>
            <person name="Dirks R.P."/>
            <person name="Spaink H.P."/>
            <person name="Duboule D."/>
            <person name="McGlinn E."/>
            <person name="Kini R.M."/>
            <person name="Richardson M.K."/>
        </authorList>
    </citation>
    <scope>IDENTIFICATION BY MASS SPECTROMETRY</scope>
    <source>
        <tissue>Venom</tissue>
    </source>
</reference>
<reference key="3">
    <citation type="journal article" date="2010" name="J. Biol. Chem.">
        <title>Structural and functional characterization of a novel homodimeric three-finger neurotoxin from the venom of Ophiophagus hannah (king cobra).</title>
        <authorList>
            <person name="Roy A."/>
            <person name="Zhou X."/>
            <person name="Chong M.Z."/>
            <person name="D'hoedt D."/>
            <person name="Foo C.S."/>
            <person name="Rajagopalan N."/>
            <person name="Nirthanan S."/>
            <person name="Bertrand D."/>
            <person name="Sivaraman J."/>
            <person name="Kini R.M."/>
        </authorList>
    </citation>
    <scope>X-RAY CRYSTALLOGRAPHY (1.55 ANGSTROMS) OF 22-86</scope>
    <scope>FUNCTION</scope>
    <scope>SUBUNIT</scope>
    <scope>DISULFIDE BONDS</scope>
    <scope>SUBCELLULAR LOCATION</scope>
    <source>
        <tissue>Venom</tissue>
    </source>
</reference>
<name>3SO8_OPHHA</name>
<sequence length="86" mass="9893">MKTLLLTLVVVTIVYLDLGYTTKCYNHQSTTPETTEICPDSGYFCYKSSWIDGREGRIERGCTFTCPELTPNGKYVYCCRRDKCNQ</sequence>
<keyword id="KW-0002">3D-structure</keyword>
<keyword id="KW-0008">Acetylcholine receptor inhibiting toxin</keyword>
<keyword id="KW-1015">Disulfide bond</keyword>
<keyword id="KW-0872">Ion channel impairing toxin</keyword>
<keyword id="KW-0528">Neurotoxin</keyword>
<keyword id="KW-0629">Postsynaptic neurotoxin</keyword>
<keyword id="KW-0964">Secreted</keyword>
<keyword id="KW-0732">Signal</keyword>
<keyword id="KW-0800">Toxin</keyword>
<proteinExistence type="evidence at protein level"/>
<protein>
    <recommendedName>
        <fullName>Haditoxin</fullName>
    </recommendedName>
    <alternativeName>
        <fullName>Muscarinic toxin-like protein 3 homolog</fullName>
        <shortName>MTLP-3 homolog</shortName>
    </alternativeName>
</protein>
<organism>
    <name type="scientific">Ophiophagus hannah</name>
    <name type="common">King cobra</name>
    <name type="synonym">Naja hannah</name>
    <dbReference type="NCBI Taxonomy" id="8665"/>
    <lineage>
        <taxon>Eukaryota</taxon>
        <taxon>Metazoa</taxon>
        <taxon>Chordata</taxon>
        <taxon>Craniata</taxon>
        <taxon>Vertebrata</taxon>
        <taxon>Euteleostomi</taxon>
        <taxon>Lepidosauria</taxon>
        <taxon>Squamata</taxon>
        <taxon>Bifurcata</taxon>
        <taxon>Unidentata</taxon>
        <taxon>Episquamata</taxon>
        <taxon>Toxicofera</taxon>
        <taxon>Serpentes</taxon>
        <taxon>Colubroidea</taxon>
        <taxon>Elapidae</taxon>
        <taxon>Elapinae</taxon>
        <taxon>Ophiophagus</taxon>
    </lineage>
</organism>